<protein>
    <recommendedName>
        <fullName evidence="1">Small ribosomal subunit protein uS13</fullName>
    </recommendedName>
    <alternativeName>
        <fullName evidence="3">30S ribosomal protein S13</fullName>
    </alternativeName>
</protein>
<accession>B2S657</accession>
<comment type="function">
    <text evidence="1">Located at the top of the head of the 30S subunit, it contacts several helices of the 16S rRNA. In the 70S ribosome it contacts the 23S rRNA (bridge B1a) and protein L5 of the 50S subunit (bridge B1b), connecting the 2 subunits; these bridges are implicated in subunit movement. Contacts the tRNAs in the A and P-sites.</text>
</comment>
<comment type="subunit">
    <text evidence="1">Part of the 30S ribosomal subunit. Forms a loose heterodimer with protein S19. Forms two bridges to the 50S subunit in the 70S ribosome.</text>
</comment>
<comment type="similarity">
    <text evidence="1">Belongs to the universal ribosomal protein uS13 family.</text>
</comment>
<feature type="chain" id="PRO_1000141228" description="Small ribosomal subunit protein uS13">
    <location>
        <begin position="1"/>
        <end position="122"/>
    </location>
</feature>
<feature type="region of interest" description="Disordered" evidence="2">
    <location>
        <begin position="97"/>
        <end position="122"/>
    </location>
</feature>
<organism>
    <name type="scientific">Brucella abortus (strain S19)</name>
    <dbReference type="NCBI Taxonomy" id="430066"/>
    <lineage>
        <taxon>Bacteria</taxon>
        <taxon>Pseudomonadati</taxon>
        <taxon>Pseudomonadota</taxon>
        <taxon>Alphaproteobacteria</taxon>
        <taxon>Hyphomicrobiales</taxon>
        <taxon>Brucellaceae</taxon>
        <taxon>Brucella/Ochrobactrum group</taxon>
        <taxon>Brucella</taxon>
    </lineage>
</organism>
<name>RS13_BRUA1</name>
<keyword id="KW-0687">Ribonucleoprotein</keyword>
<keyword id="KW-0689">Ribosomal protein</keyword>
<keyword id="KW-0694">RNA-binding</keyword>
<keyword id="KW-0699">rRNA-binding</keyword>
<keyword id="KW-0820">tRNA-binding</keyword>
<dbReference type="EMBL" id="CP000887">
    <property type="protein sequence ID" value="ACD72654.1"/>
    <property type="molecule type" value="Genomic_DNA"/>
</dbReference>
<dbReference type="RefSeq" id="WP_002964340.1">
    <property type="nucleotide sequence ID" value="NC_010742.1"/>
</dbReference>
<dbReference type="SMR" id="B2S657"/>
<dbReference type="GeneID" id="97533546"/>
<dbReference type="KEGG" id="bmc:BAbS19_I11490"/>
<dbReference type="HOGENOM" id="CLU_103849_1_2_5"/>
<dbReference type="Proteomes" id="UP000002565">
    <property type="component" value="Chromosome 1"/>
</dbReference>
<dbReference type="GO" id="GO:0005829">
    <property type="term" value="C:cytosol"/>
    <property type="evidence" value="ECO:0007669"/>
    <property type="project" value="TreeGrafter"/>
</dbReference>
<dbReference type="GO" id="GO:0015935">
    <property type="term" value="C:small ribosomal subunit"/>
    <property type="evidence" value="ECO:0007669"/>
    <property type="project" value="TreeGrafter"/>
</dbReference>
<dbReference type="GO" id="GO:0019843">
    <property type="term" value="F:rRNA binding"/>
    <property type="evidence" value="ECO:0007669"/>
    <property type="project" value="UniProtKB-UniRule"/>
</dbReference>
<dbReference type="GO" id="GO:0003735">
    <property type="term" value="F:structural constituent of ribosome"/>
    <property type="evidence" value="ECO:0007669"/>
    <property type="project" value="InterPro"/>
</dbReference>
<dbReference type="GO" id="GO:0000049">
    <property type="term" value="F:tRNA binding"/>
    <property type="evidence" value="ECO:0007669"/>
    <property type="project" value="UniProtKB-UniRule"/>
</dbReference>
<dbReference type="GO" id="GO:0006412">
    <property type="term" value="P:translation"/>
    <property type="evidence" value="ECO:0007669"/>
    <property type="project" value="UniProtKB-UniRule"/>
</dbReference>
<dbReference type="FunFam" id="1.10.8.50:FF:000001">
    <property type="entry name" value="30S ribosomal protein S13"/>
    <property type="match status" value="1"/>
</dbReference>
<dbReference type="FunFam" id="4.10.910.10:FF:000001">
    <property type="entry name" value="30S ribosomal protein S13"/>
    <property type="match status" value="1"/>
</dbReference>
<dbReference type="Gene3D" id="1.10.8.50">
    <property type="match status" value="1"/>
</dbReference>
<dbReference type="Gene3D" id="4.10.910.10">
    <property type="entry name" value="30s ribosomal protein s13, domain 2"/>
    <property type="match status" value="1"/>
</dbReference>
<dbReference type="HAMAP" id="MF_01315">
    <property type="entry name" value="Ribosomal_uS13"/>
    <property type="match status" value="1"/>
</dbReference>
<dbReference type="InterPro" id="IPR027437">
    <property type="entry name" value="Rbsml_uS13_C"/>
</dbReference>
<dbReference type="InterPro" id="IPR001892">
    <property type="entry name" value="Ribosomal_uS13"/>
</dbReference>
<dbReference type="InterPro" id="IPR010979">
    <property type="entry name" value="Ribosomal_uS13-like_H2TH"/>
</dbReference>
<dbReference type="InterPro" id="IPR019980">
    <property type="entry name" value="Ribosomal_uS13_bac-type"/>
</dbReference>
<dbReference type="InterPro" id="IPR018269">
    <property type="entry name" value="Ribosomal_uS13_CS"/>
</dbReference>
<dbReference type="NCBIfam" id="TIGR03631">
    <property type="entry name" value="uS13_bact"/>
    <property type="match status" value="1"/>
</dbReference>
<dbReference type="PANTHER" id="PTHR10871">
    <property type="entry name" value="30S RIBOSOMAL PROTEIN S13/40S RIBOSOMAL PROTEIN S18"/>
    <property type="match status" value="1"/>
</dbReference>
<dbReference type="PANTHER" id="PTHR10871:SF1">
    <property type="entry name" value="SMALL RIBOSOMAL SUBUNIT PROTEIN US13M"/>
    <property type="match status" value="1"/>
</dbReference>
<dbReference type="Pfam" id="PF00416">
    <property type="entry name" value="Ribosomal_S13"/>
    <property type="match status" value="1"/>
</dbReference>
<dbReference type="PIRSF" id="PIRSF002134">
    <property type="entry name" value="Ribosomal_S13"/>
    <property type="match status" value="1"/>
</dbReference>
<dbReference type="SUPFAM" id="SSF46946">
    <property type="entry name" value="S13-like H2TH domain"/>
    <property type="match status" value="1"/>
</dbReference>
<dbReference type="PROSITE" id="PS00646">
    <property type="entry name" value="RIBOSOMAL_S13_1"/>
    <property type="match status" value="1"/>
</dbReference>
<dbReference type="PROSITE" id="PS50159">
    <property type="entry name" value="RIBOSOMAL_S13_2"/>
    <property type="match status" value="1"/>
</dbReference>
<gene>
    <name evidence="1" type="primary">rpsM</name>
    <name type="ordered locus">BAbS19_I11490</name>
</gene>
<sequence length="122" mass="13769">MARIAGVNIPTNKRVNIALQYIHGIGPKFAREIVTKVGIADDRRVNQLSDAEVLQIREAIDADYQVEGDLRREVSMNIKRLMDLGCYRGLRHRRSLPVRGQRTHTNARTRKGPAKAIAGKKK</sequence>
<proteinExistence type="inferred from homology"/>
<evidence type="ECO:0000255" key="1">
    <source>
        <dbReference type="HAMAP-Rule" id="MF_01315"/>
    </source>
</evidence>
<evidence type="ECO:0000256" key="2">
    <source>
        <dbReference type="SAM" id="MobiDB-lite"/>
    </source>
</evidence>
<evidence type="ECO:0000305" key="3"/>
<reference key="1">
    <citation type="journal article" date="2008" name="PLoS ONE">
        <title>Genome sequence of Brucella abortus vaccine strain S19 compared to virulent strains yields candidate virulence genes.</title>
        <authorList>
            <person name="Crasta O.R."/>
            <person name="Folkerts O."/>
            <person name="Fei Z."/>
            <person name="Mane S.P."/>
            <person name="Evans C."/>
            <person name="Martino-Catt S."/>
            <person name="Bricker B."/>
            <person name="Yu G."/>
            <person name="Du L."/>
            <person name="Sobral B.W."/>
        </authorList>
    </citation>
    <scope>NUCLEOTIDE SEQUENCE [LARGE SCALE GENOMIC DNA]</scope>
    <source>
        <strain>S19</strain>
    </source>
</reference>